<reference key="1">
    <citation type="journal article" date="1994" name="J. Biol. Chem.">
        <title>Molecular characterization of the functionally distinct hemoglobins of the Antarctic fish Trematomus newnesi.</title>
        <authorList>
            <person name="D'Avino R."/>
            <person name="Caruso C."/>
            <person name="Tamburrini M."/>
            <person name="Romano M."/>
            <person name="Rutigliano B."/>
            <person name="Polverino de Laureto P."/>
            <person name="Camardella L."/>
            <person name="Carratore V."/>
            <person name="di Prisco G."/>
        </authorList>
    </citation>
    <scope>PROTEIN SEQUENCE</scope>
    <scope>FUNCTION</scope>
    <scope>SUBUNIT</scope>
</reference>
<reference evidence="4" key="2">
    <citation type="journal article" date="2002" name="Proc. Natl. Acad. Sci. U.S.A.">
        <title>The crystal structure of a tetrameric hemoglobin in a partial hemichrome state.</title>
        <authorList>
            <person name="Riccio A."/>
            <person name="Vitagliano L."/>
            <person name="di Prisco G."/>
            <person name="Zagari A."/>
            <person name="Mazzarella L."/>
        </authorList>
    </citation>
    <scope>X-RAY CRYSTALLOGRAPHY (2.00 ANGSTROMS) IN COMPLEX WITH HEME</scope>
</reference>
<organism>
    <name type="scientific">Trematomus newnesi</name>
    <name type="common">Dusky notothen</name>
    <dbReference type="NCBI Taxonomy" id="35730"/>
    <lineage>
        <taxon>Eukaryota</taxon>
        <taxon>Metazoa</taxon>
        <taxon>Chordata</taxon>
        <taxon>Craniata</taxon>
        <taxon>Vertebrata</taxon>
        <taxon>Euteleostomi</taxon>
        <taxon>Actinopterygii</taxon>
        <taxon>Neopterygii</taxon>
        <taxon>Teleostei</taxon>
        <taxon>Neoteleostei</taxon>
        <taxon>Acanthomorphata</taxon>
        <taxon>Eupercaria</taxon>
        <taxon>Perciformes</taxon>
        <taxon>Notothenioidei</taxon>
        <taxon>Nototheniidae</taxon>
        <taxon>Trematomus</taxon>
    </lineage>
</organism>
<feature type="chain" id="PRO_0000053135" description="Hemoglobin subunit beta-1/2">
    <location>
        <begin position="1"/>
        <end position="146"/>
    </location>
</feature>
<feature type="domain" description="Globin" evidence="1">
    <location>
        <begin position="2"/>
        <end position="146"/>
    </location>
</feature>
<feature type="binding site" description="distal binding residue" evidence="2 4">
    <location>
        <position position="63"/>
    </location>
    <ligand>
        <name>heme b</name>
        <dbReference type="ChEBI" id="CHEBI:60344"/>
    </ligand>
    <ligandPart>
        <name>Fe</name>
        <dbReference type="ChEBI" id="CHEBI:18248"/>
    </ligandPart>
</feature>
<feature type="binding site" description="proximal binding residue" evidence="2 4 5 6 7 8">
    <location>
        <position position="92"/>
    </location>
    <ligand>
        <name>heme b</name>
        <dbReference type="ChEBI" id="CHEBI:60344"/>
    </ligand>
    <ligandPart>
        <name>Fe</name>
        <dbReference type="ChEBI" id="CHEBI:18248"/>
    </ligandPart>
</feature>
<feature type="helix" evidence="9">
    <location>
        <begin position="5"/>
        <end position="17"/>
    </location>
</feature>
<feature type="helix" evidence="9">
    <location>
        <begin position="20"/>
        <end position="34"/>
    </location>
</feature>
<feature type="helix" evidence="9">
    <location>
        <begin position="36"/>
        <end position="42"/>
    </location>
</feature>
<feature type="helix" evidence="10">
    <location>
        <begin position="43"/>
        <end position="45"/>
    </location>
</feature>
<feature type="helix" evidence="9">
    <location>
        <begin position="51"/>
        <end position="56"/>
    </location>
</feature>
<feature type="helix" evidence="9">
    <location>
        <begin position="58"/>
        <end position="70"/>
    </location>
</feature>
<feature type="helix" evidence="9">
    <location>
        <begin position="72"/>
        <end position="76"/>
    </location>
</feature>
<feature type="helix" evidence="9">
    <location>
        <begin position="77"/>
        <end position="80"/>
    </location>
</feature>
<feature type="helix" evidence="9">
    <location>
        <begin position="81"/>
        <end position="84"/>
    </location>
</feature>
<feature type="helix" evidence="9">
    <location>
        <begin position="86"/>
        <end position="94"/>
    </location>
</feature>
<feature type="helix" evidence="9">
    <location>
        <begin position="101"/>
        <end position="118"/>
    </location>
</feature>
<feature type="helix" evidence="9">
    <location>
        <begin position="119"/>
        <end position="121"/>
    </location>
</feature>
<feature type="helix" evidence="9">
    <location>
        <begin position="124"/>
        <end position="142"/>
    </location>
</feature>
<comment type="function">
    <text evidence="3">Involved in oxygen transport from gills to the various peripheral tissues.</text>
</comment>
<comment type="subunit">
    <text evidence="3">Hb1 is a heterotetramer of two alpha-1 chains and two beta chains. Hb2 is a heterotetramer of two alpha-2 chains and two beta chains.</text>
</comment>
<comment type="tissue specificity">
    <text>Red blood cells.</text>
</comment>
<comment type="miscellaneous">
    <text>This fish has three hemoglobins: Hb1 (major, about 65-70% of the total), Hb2 (about 5% of the total) and HbC (about 20-25% of the total). Hb1 and Hb2 display a very weak Bohr effect and no Root effect.</text>
</comment>
<comment type="similarity">
    <text evidence="1">Belongs to the globin family.</text>
</comment>
<protein>
    <recommendedName>
        <fullName>Hemoglobin subunit beta-1/2</fullName>
    </recommendedName>
    <alternativeName>
        <fullName>Beta-1/2-globin</fullName>
    </alternativeName>
    <alternativeName>
        <fullName>Hemoglobin beta-1/2 chain</fullName>
    </alternativeName>
</protein>
<proteinExistence type="evidence at protein level"/>
<keyword id="KW-0002">3D-structure</keyword>
<keyword id="KW-0903">Direct protein sequencing</keyword>
<keyword id="KW-0349">Heme</keyword>
<keyword id="KW-0408">Iron</keyword>
<keyword id="KW-0479">Metal-binding</keyword>
<keyword id="KW-0561">Oxygen transport</keyword>
<keyword id="KW-0813">Transport</keyword>
<sequence length="146" mass="16226">VEWTDKERSIISDIFSHMDYDDIGPKALSRCLVVYPWTQRYFSGFGNLYNAEGIMSNANVAAHGIKVLHGLDRGMKNMDNIADAYTDLSTLHSEKLHVDPDNFKLLSDCITIVLAAKMGHAFTAETQGAFQKFLAAVVSALGKQYH</sequence>
<dbReference type="PIR" id="C54403">
    <property type="entry name" value="C54403"/>
</dbReference>
<dbReference type="PDB" id="1LA6">
    <property type="method" value="X-ray"/>
    <property type="resolution" value="2.00 A"/>
    <property type="chains" value="B=1-146"/>
</dbReference>
<dbReference type="PDB" id="1T1N">
    <property type="method" value="X-ray"/>
    <property type="resolution" value="2.20 A"/>
    <property type="chains" value="B=1-146"/>
</dbReference>
<dbReference type="PDB" id="3D1K">
    <property type="method" value="X-ray"/>
    <property type="resolution" value="1.25 A"/>
    <property type="chains" value="B=1-146"/>
</dbReference>
<dbReference type="PDB" id="3NFE">
    <property type="method" value="X-ray"/>
    <property type="resolution" value="2.01 A"/>
    <property type="chains" value="B/D=1-146"/>
</dbReference>
<dbReference type="PDB" id="3NG6">
    <property type="method" value="X-ray"/>
    <property type="resolution" value="2.20 A"/>
    <property type="chains" value="B/D=1-146"/>
</dbReference>
<dbReference type="PDB" id="5LFG">
    <property type="method" value="X-ray"/>
    <property type="resolution" value="1.94 A"/>
    <property type="chains" value="B/D=1-146"/>
</dbReference>
<dbReference type="PDBsum" id="1LA6"/>
<dbReference type="PDBsum" id="1T1N"/>
<dbReference type="PDBsum" id="3D1K"/>
<dbReference type="PDBsum" id="3NFE"/>
<dbReference type="PDBsum" id="3NG6"/>
<dbReference type="PDBsum" id="5LFG"/>
<dbReference type="SMR" id="P45720"/>
<dbReference type="MINT" id="P45720"/>
<dbReference type="EvolutionaryTrace" id="P45720"/>
<dbReference type="GO" id="GO:0072562">
    <property type="term" value="C:blood microparticle"/>
    <property type="evidence" value="ECO:0007669"/>
    <property type="project" value="TreeGrafter"/>
</dbReference>
<dbReference type="GO" id="GO:0031838">
    <property type="term" value="C:haptoglobin-hemoglobin complex"/>
    <property type="evidence" value="ECO:0007669"/>
    <property type="project" value="TreeGrafter"/>
</dbReference>
<dbReference type="GO" id="GO:0005833">
    <property type="term" value="C:hemoglobin complex"/>
    <property type="evidence" value="ECO:0007669"/>
    <property type="project" value="InterPro"/>
</dbReference>
<dbReference type="GO" id="GO:0031720">
    <property type="term" value="F:haptoglobin binding"/>
    <property type="evidence" value="ECO:0007669"/>
    <property type="project" value="TreeGrafter"/>
</dbReference>
<dbReference type="GO" id="GO:0020037">
    <property type="term" value="F:heme binding"/>
    <property type="evidence" value="ECO:0007669"/>
    <property type="project" value="InterPro"/>
</dbReference>
<dbReference type="GO" id="GO:0046872">
    <property type="term" value="F:metal ion binding"/>
    <property type="evidence" value="ECO:0007669"/>
    <property type="project" value="UniProtKB-KW"/>
</dbReference>
<dbReference type="GO" id="GO:0043177">
    <property type="term" value="F:organic acid binding"/>
    <property type="evidence" value="ECO:0007669"/>
    <property type="project" value="TreeGrafter"/>
</dbReference>
<dbReference type="GO" id="GO:0019825">
    <property type="term" value="F:oxygen binding"/>
    <property type="evidence" value="ECO:0007669"/>
    <property type="project" value="InterPro"/>
</dbReference>
<dbReference type="GO" id="GO:0005344">
    <property type="term" value="F:oxygen carrier activity"/>
    <property type="evidence" value="ECO:0007669"/>
    <property type="project" value="UniProtKB-KW"/>
</dbReference>
<dbReference type="GO" id="GO:0004601">
    <property type="term" value="F:peroxidase activity"/>
    <property type="evidence" value="ECO:0007669"/>
    <property type="project" value="TreeGrafter"/>
</dbReference>
<dbReference type="GO" id="GO:0042744">
    <property type="term" value="P:hydrogen peroxide catabolic process"/>
    <property type="evidence" value="ECO:0007669"/>
    <property type="project" value="TreeGrafter"/>
</dbReference>
<dbReference type="CDD" id="cd08925">
    <property type="entry name" value="Hb-beta-like"/>
    <property type="match status" value="1"/>
</dbReference>
<dbReference type="FunFam" id="1.10.490.10:FF:000001">
    <property type="entry name" value="Hemoglobin subunit beta"/>
    <property type="match status" value="1"/>
</dbReference>
<dbReference type="Gene3D" id="1.10.490.10">
    <property type="entry name" value="Globins"/>
    <property type="match status" value="1"/>
</dbReference>
<dbReference type="InterPro" id="IPR000971">
    <property type="entry name" value="Globin"/>
</dbReference>
<dbReference type="InterPro" id="IPR009050">
    <property type="entry name" value="Globin-like_sf"/>
</dbReference>
<dbReference type="InterPro" id="IPR012292">
    <property type="entry name" value="Globin/Proto"/>
</dbReference>
<dbReference type="InterPro" id="IPR002337">
    <property type="entry name" value="Hemoglobin_b"/>
</dbReference>
<dbReference type="InterPro" id="IPR050056">
    <property type="entry name" value="Hemoglobin_oxygen_transport"/>
</dbReference>
<dbReference type="PANTHER" id="PTHR11442">
    <property type="entry name" value="HEMOGLOBIN FAMILY MEMBER"/>
    <property type="match status" value="1"/>
</dbReference>
<dbReference type="PANTHER" id="PTHR11442:SF7">
    <property type="entry name" value="HEMOGLOBIN SUBUNIT EPSILON"/>
    <property type="match status" value="1"/>
</dbReference>
<dbReference type="Pfam" id="PF00042">
    <property type="entry name" value="Globin"/>
    <property type="match status" value="1"/>
</dbReference>
<dbReference type="PRINTS" id="PR00814">
    <property type="entry name" value="BETAHAEM"/>
</dbReference>
<dbReference type="SUPFAM" id="SSF46458">
    <property type="entry name" value="Globin-like"/>
    <property type="match status" value="1"/>
</dbReference>
<dbReference type="PROSITE" id="PS01033">
    <property type="entry name" value="GLOBIN"/>
    <property type="match status" value="1"/>
</dbReference>
<evidence type="ECO:0000255" key="1">
    <source>
        <dbReference type="PROSITE-ProRule" id="PRU00238"/>
    </source>
</evidence>
<evidence type="ECO:0000269" key="2">
    <source>
    </source>
</evidence>
<evidence type="ECO:0000269" key="3">
    <source>
    </source>
</evidence>
<evidence type="ECO:0007744" key="4">
    <source>
        <dbReference type="PDB" id="1LA6"/>
    </source>
</evidence>
<evidence type="ECO:0007744" key="5">
    <source>
        <dbReference type="PDB" id="1T1N"/>
    </source>
</evidence>
<evidence type="ECO:0007744" key="6">
    <source>
        <dbReference type="PDB" id="3D1K"/>
    </source>
</evidence>
<evidence type="ECO:0007744" key="7">
    <source>
        <dbReference type="PDB" id="3NFE"/>
    </source>
</evidence>
<evidence type="ECO:0007744" key="8">
    <source>
        <dbReference type="PDB" id="3NG6"/>
    </source>
</evidence>
<evidence type="ECO:0007829" key="9">
    <source>
        <dbReference type="PDB" id="3D1K"/>
    </source>
</evidence>
<evidence type="ECO:0007829" key="10">
    <source>
        <dbReference type="PDB" id="5LFG"/>
    </source>
</evidence>
<accession>P45720</accession>
<name>HBB_TRENE</name>